<organism>
    <name type="scientific">Haloferax volcanii (strain ATCC 29605 / DSM 3757 / JCM 8879 / NBRC 14742 / NCIMB 2012 / VKM B-1768 / DS2)</name>
    <name type="common">Halobacterium volcanii</name>
    <dbReference type="NCBI Taxonomy" id="309800"/>
    <lineage>
        <taxon>Archaea</taxon>
        <taxon>Methanobacteriati</taxon>
        <taxon>Methanobacteriota</taxon>
        <taxon>Stenosarchaea group</taxon>
        <taxon>Halobacteria</taxon>
        <taxon>Halobacteriales</taxon>
        <taxon>Haloferacaceae</taxon>
        <taxon>Haloferax</taxon>
    </lineage>
</organism>
<comment type="function">
    <text evidence="1 2">CRISPR (clustered regularly interspaced short palindromic repeat) is an adaptive immune system that provides protection against mobile genetic elements (viruses, transposable elements and conjugative plasmids). CRISPR clusters contain sequences complementary to antecedent mobile elements and target invading nucleic acids. CRISPR clusters are transcribed and processed into CRISPR RNA (crRNA). This protein may be a 5' to 3' ssDNA exonuclease. Plasmid targeted by CRISPR locus P1 transform wild-type cells very poorly (PubMed:22767603).</text>
</comment>
<comment type="catalytic activity">
    <reaction evidence="1">
        <text>exonucleolytic cleavage in the 5'- to 3'-direction to yield nucleoside 3'-phosphates.</text>
        <dbReference type="EC" id="3.1.12.1"/>
    </reaction>
</comment>
<comment type="cofactor">
    <cofactor evidence="1">
        <name>Mg(2+)</name>
        <dbReference type="ChEBI" id="CHEBI:18420"/>
    </cofactor>
    <cofactor evidence="1">
        <name>Mn(2+)</name>
        <dbReference type="ChEBI" id="CHEBI:29035"/>
    </cofactor>
    <cofactor evidence="1">
        <name>Cu(2+)</name>
        <dbReference type="ChEBI" id="CHEBI:29036"/>
    </cofactor>
    <text evidence="1">Mg(2+) or Mn(2+) required for ssDNA cleavage activity. Can also utilise Cu(2+).</text>
</comment>
<comment type="cofactor">
    <cofactor evidence="1">
        <name>[4Fe-4S] cluster</name>
        <dbReference type="ChEBI" id="CHEBI:49883"/>
    </cofactor>
    <text evidence="1">Binds 1 [4Fe-4S] cluster per subunit.</text>
</comment>
<comment type="disruption phenotype">
    <text evidence="2">Loss of the 8 Cas genes in this locus (cas1, cas2, cas3, cas4, cas5, cas6, cas7 and cas8b) leads to loss of CRISPR interference against plasmid targeted by this CRISPR locus, i.e. plasmid is not destroyed by CRISPR.</text>
</comment>
<comment type="miscellaneous">
    <text evidence="3 4">There are 3 CRISPR RNA loci in this organism and a single cas gene locus. A CRISPR-Cas type I-B system.</text>
</comment>
<comment type="similarity">
    <text evidence="5">Belongs to the CRISPR-associated exonuclease Cas4 family.</text>
</comment>
<protein>
    <recommendedName>
        <fullName>CRISPR-associated exonuclease Cas4</fullName>
        <ecNumber evidence="1">3.1.12.1</ecNumber>
    </recommendedName>
</protein>
<evidence type="ECO:0000250" key="1">
    <source>
        <dbReference type="UniProtKB" id="Q97TX9"/>
    </source>
</evidence>
<evidence type="ECO:0000269" key="2">
    <source>
    </source>
</evidence>
<evidence type="ECO:0000303" key="3">
    <source>
    </source>
</evidence>
<evidence type="ECO:0000303" key="4">
    <source>
    </source>
</evidence>
<evidence type="ECO:0000305" key="5"/>
<geneLocation type="plasmid">
    <name>pHV4</name>
</geneLocation>
<proteinExistence type="inferred from homology"/>
<feature type="chain" id="PRO_0000432151" description="CRISPR-associated exonuclease Cas4">
    <location>
        <begin position="1"/>
        <end position="183"/>
    </location>
</feature>
<feature type="binding site" evidence="1">
    <location>
        <position position="36"/>
    </location>
    <ligand>
        <name>[4Fe-4S] cluster</name>
        <dbReference type="ChEBI" id="CHEBI:49883"/>
    </ligand>
</feature>
<feature type="binding site" evidence="1">
    <location>
        <position position="83"/>
    </location>
    <ligand>
        <name>Mn(2+)</name>
        <dbReference type="ChEBI" id="CHEBI:29035"/>
    </ligand>
</feature>
<feature type="binding site" evidence="1">
    <location>
        <position position="92"/>
    </location>
    <ligand>
        <name>Mn(2+)</name>
        <dbReference type="ChEBI" id="CHEBI:29035"/>
    </ligand>
</feature>
<feature type="binding site" evidence="1">
    <location>
        <position position="172"/>
    </location>
    <ligand>
        <name>[4Fe-4S] cluster</name>
        <dbReference type="ChEBI" id="CHEBI:49883"/>
    </ligand>
</feature>
<feature type="binding site" evidence="1">
    <location>
        <position position="175"/>
    </location>
    <ligand>
        <name>[4Fe-4S] cluster</name>
        <dbReference type="ChEBI" id="CHEBI:49883"/>
    </ligand>
</feature>
<feature type="binding site" evidence="1">
    <location>
        <position position="181"/>
    </location>
    <ligand>
        <name>[4Fe-4S] cluster</name>
        <dbReference type="ChEBI" id="CHEBI:49883"/>
    </ligand>
</feature>
<name>CAS4_HALVD</name>
<sequence length="183" mass="21152">MSSTDVVEEYVQDERDPSRSPNVPITGLMVQYYHVCKRELWFMANGIDIDRETTNIQRGTHVDETSYGTSRRSFMIDNRIQLDILDSGDVMEVKVSSALEKPARMQLLFYLWYLREIHDIDKDGVLAYPTERKRESVVLDETTTAEVESTVRGVLDVVGRDSPPQLEKKPYCGTCLYQDLCWM</sequence>
<dbReference type="EC" id="3.1.12.1" evidence="1"/>
<dbReference type="EMBL" id="CP001955">
    <property type="protein sequence ID" value="ADE02138.1"/>
    <property type="molecule type" value="Genomic_DNA"/>
</dbReference>
<dbReference type="RefSeq" id="WP_013035187.1">
    <property type="nucleotide sequence ID" value="NC_013966.1"/>
</dbReference>
<dbReference type="SMR" id="D4GQN9"/>
<dbReference type="PaxDb" id="309800-C498_09726"/>
<dbReference type="EnsemblBacteria" id="ADE02138">
    <property type="protein sequence ID" value="ADE02138"/>
    <property type="gene ID" value="HVO_A0210"/>
</dbReference>
<dbReference type="GeneID" id="8923865"/>
<dbReference type="KEGG" id="hvo:HVO_A0210"/>
<dbReference type="eggNOG" id="arCOG00794">
    <property type="taxonomic scope" value="Archaea"/>
</dbReference>
<dbReference type="HOGENOM" id="CLU_133784_0_0_2"/>
<dbReference type="Proteomes" id="UP000008243">
    <property type="component" value="Plasmid pHV4"/>
</dbReference>
<dbReference type="GO" id="GO:0051539">
    <property type="term" value="F:4 iron, 4 sulfur cluster binding"/>
    <property type="evidence" value="ECO:0007669"/>
    <property type="project" value="UniProtKB-KW"/>
</dbReference>
<dbReference type="GO" id="GO:0004527">
    <property type="term" value="F:exonuclease activity"/>
    <property type="evidence" value="ECO:0007669"/>
    <property type="project" value="UniProtKB-KW"/>
</dbReference>
<dbReference type="GO" id="GO:0046872">
    <property type="term" value="F:metal ion binding"/>
    <property type="evidence" value="ECO:0007669"/>
    <property type="project" value="UniProtKB-KW"/>
</dbReference>
<dbReference type="GO" id="GO:0051607">
    <property type="term" value="P:defense response to virus"/>
    <property type="evidence" value="ECO:0007669"/>
    <property type="project" value="UniProtKB-KW"/>
</dbReference>
<dbReference type="Gene3D" id="3.90.320.10">
    <property type="match status" value="1"/>
</dbReference>
<dbReference type="InterPro" id="IPR013343">
    <property type="entry name" value="CRISPR-assoc_prot_Cas4"/>
</dbReference>
<dbReference type="InterPro" id="IPR022765">
    <property type="entry name" value="Dna2/Cas4_DUF83"/>
</dbReference>
<dbReference type="InterPro" id="IPR011604">
    <property type="entry name" value="PDDEXK-like_dom_sf"/>
</dbReference>
<dbReference type="NCBIfam" id="TIGR00372">
    <property type="entry name" value="cas4"/>
    <property type="match status" value="1"/>
</dbReference>
<dbReference type="PANTHER" id="PTHR37168">
    <property type="entry name" value="CRISPR-ASSOCIATED EXONUCLEASE CAS4"/>
    <property type="match status" value="1"/>
</dbReference>
<dbReference type="PANTHER" id="PTHR37168:SF2">
    <property type="entry name" value="CRISPR-ASSOCIATED EXONUCLEASE CAS4"/>
    <property type="match status" value="1"/>
</dbReference>
<dbReference type="Pfam" id="PF01930">
    <property type="entry name" value="Cas_Cas4"/>
    <property type="match status" value="1"/>
</dbReference>
<keyword id="KW-0004">4Fe-4S</keyword>
<keyword id="KW-0051">Antiviral defense</keyword>
<keyword id="KW-0269">Exonuclease</keyword>
<keyword id="KW-0378">Hydrolase</keyword>
<keyword id="KW-0408">Iron</keyword>
<keyword id="KW-0411">Iron-sulfur</keyword>
<keyword id="KW-0464">Manganese</keyword>
<keyword id="KW-0479">Metal-binding</keyword>
<keyword id="KW-0540">Nuclease</keyword>
<keyword id="KW-0614">Plasmid</keyword>
<keyword id="KW-1185">Reference proteome</keyword>
<reference key="1">
    <citation type="journal article" date="2010" name="PLoS ONE">
        <title>The complete genome sequence of Haloferax volcanii DS2, a model archaeon.</title>
        <authorList>
            <person name="Hartman A.L."/>
            <person name="Norais C."/>
            <person name="Badger J.H."/>
            <person name="Delmas S."/>
            <person name="Haldenby S."/>
            <person name="Madupu R."/>
            <person name="Robinson J."/>
            <person name="Khouri H."/>
            <person name="Ren Q."/>
            <person name="Lowe T.M."/>
            <person name="Maupin-Furlow J."/>
            <person name="Pohlschroder M."/>
            <person name="Daniels C."/>
            <person name="Pfeiffer F."/>
            <person name="Allers T."/>
            <person name="Eisen J.A."/>
        </authorList>
    </citation>
    <scope>NUCLEOTIDE SEQUENCE [LARGE SCALE GENOMIC DNA]</scope>
    <source>
        <strain>ATCC 29605 / DSM 3757 / JCM 8879 / NBRC 14742 / NCIMB 2012 / VKM B-1768 / DS2</strain>
    </source>
</reference>
<reference key="2">
    <citation type="journal article" date="2012" name="J. Biol. Chem.">
        <title>An archaeal immune system can detect multiple protospacer adjacent motifs (PAMs) to target invader DNA.</title>
        <authorList>
            <person name="Fischer S."/>
            <person name="Maier L.K."/>
            <person name="Stoll B."/>
            <person name="Brendel J."/>
            <person name="Fischer E."/>
            <person name="Pfeiffer F."/>
            <person name="Dyall-Smith M."/>
            <person name="Marchfelder A."/>
        </authorList>
    </citation>
    <scope>FUNCTION</scope>
    <scope>DISRUPTION PHENOTYPE</scope>
    <source>
        <strain>DS2 / DS70 / H26</strain>
    </source>
</reference>
<accession>D4GQN9</accession>
<gene>
    <name type="primary">cas4</name>
    <name type="ordered locus">HVO_A0210</name>
</gene>